<evidence type="ECO:0000255" key="1">
    <source>
        <dbReference type="HAMAP-Rule" id="MF_01669"/>
    </source>
</evidence>
<proteinExistence type="inferred from homology"/>
<sequence length="644" mass="70940">MQTVRMTTAQALVKFLNQQYVEFDGKQQKFIKGIFTIFGHGNVVGLGQALEEDAGELEVYQGRNEQGMANAAMAFAKQKHRKQIMACTSSVGPGSANMITSAATASANNIPVLLLPGDVFATRQPDPVLQQIEQTHDLSISTNDAFRAVSKYWDRINRPEQLMTAMIQAMRVLTNPADTGAVTICLPQDVQGEAWDFPSYFFQKRVHRIERRLPTKASLADAVEMIKRKKKPVMICGGGVRYAEAAEELKQFAETFHIPFGETQAGKSAIESSHPYNLGGIGVTGNIAANTIAKEADLVIGIGTRFTDFTTASKQLFQNEEVEFVNINISEFHANKLDALKVIADAKEALLTLIDELQVIDYRSSYTVEIADAKEAWETELSRLHNIRFTGQDFTPEVEGHFDGNLNEYVDALGSQLTQTAVIGQINTLLDEDAIIVGAAGSLPGDLQRMWASRKPNTYHMEYGYSCMGYEVAGALGAKIAEPSKEVYAMVGDGSYQMLHSELVTSLQENKKINVLLFDNSGFGCINNLQMGNGMGSFGTEFRYRNQETRKLDGAIMKIDFAASAAGYGVKTYHVTSLEQLREALIDAKKQTVSTLIDIKVLPKTMTNGYESWWHVGVAEVSKSQSVQAAYESKVSNLQQARSY</sequence>
<feature type="chain" id="PRO_0000352530" description="3D-(3,5/4)-trihydroxycyclohexane-1,2-dione hydrolase 1">
    <location>
        <begin position="1"/>
        <end position="644"/>
    </location>
</feature>
<feature type="region of interest" description="Thiamine pyrophosphate binding" evidence="1">
    <location>
        <begin position="442"/>
        <end position="522"/>
    </location>
</feature>
<feature type="binding site" evidence="1">
    <location>
        <position position="65"/>
    </location>
    <ligand>
        <name>thiamine diphosphate</name>
        <dbReference type="ChEBI" id="CHEBI:58937"/>
    </ligand>
</feature>
<feature type="binding site" evidence="1">
    <location>
        <position position="493"/>
    </location>
    <ligand>
        <name>Mg(2+)</name>
        <dbReference type="ChEBI" id="CHEBI:18420"/>
    </ligand>
</feature>
<feature type="binding site" evidence="1">
    <location>
        <position position="520"/>
    </location>
    <ligand>
        <name>Mg(2+)</name>
        <dbReference type="ChEBI" id="CHEBI:18420"/>
    </ligand>
</feature>
<reference key="1">
    <citation type="journal article" date="2006" name="J. Bacteriol.">
        <title>Pathogenomic sequence analysis of Bacillus cereus and Bacillus thuringiensis isolates closely related to Bacillus anthracis.</title>
        <authorList>
            <person name="Han C.S."/>
            <person name="Xie G."/>
            <person name="Challacombe J.F."/>
            <person name="Altherr M.R."/>
            <person name="Bhotika S.S."/>
            <person name="Bruce D."/>
            <person name="Campbell C.S."/>
            <person name="Campbell M.L."/>
            <person name="Chen J."/>
            <person name="Chertkov O."/>
            <person name="Cleland C."/>
            <person name="Dimitrijevic M."/>
            <person name="Doggett N.A."/>
            <person name="Fawcett J.J."/>
            <person name="Glavina T."/>
            <person name="Goodwin L.A."/>
            <person name="Hill K.K."/>
            <person name="Hitchcock P."/>
            <person name="Jackson P.J."/>
            <person name="Keim P."/>
            <person name="Kewalramani A.R."/>
            <person name="Longmire J."/>
            <person name="Lucas S."/>
            <person name="Malfatti S."/>
            <person name="McMurry K."/>
            <person name="Meincke L.J."/>
            <person name="Misra M."/>
            <person name="Moseman B.L."/>
            <person name="Mundt M."/>
            <person name="Munk A.C."/>
            <person name="Okinaka R.T."/>
            <person name="Parson-Quintana B."/>
            <person name="Reilly L.P."/>
            <person name="Richardson P."/>
            <person name="Robinson D.L."/>
            <person name="Rubin E."/>
            <person name="Saunders E."/>
            <person name="Tapia R."/>
            <person name="Tesmer J.G."/>
            <person name="Thayer N."/>
            <person name="Thompson L.S."/>
            <person name="Tice H."/>
            <person name="Ticknor L.O."/>
            <person name="Wills P.L."/>
            <person name="Brettin T.S."/>
            <person name="Gilna P."/>
        </authorList>
    </citation>
    <scope>NUCLEOTIDE SEQUENCE [LARGE SCALE GENOMIC DNA]</scope>
    <source>
        <strain>ZK / E33L</strain>
    </source>
</reference>
<dbReference type="EC" id="3.7.1.22" evidence="1"/>
<dbReference type="EMBL" id="CP000001">
    <property type="protein sequence ID" value="AAU18004.1"/>
    <property type="molecule type" value="Genomic_DNA"/>
</dbReference>
<dbReference type="RefSeq" id="WP_001195343.1">
    <property type="nucleotide sequence ID" value="NC_006274.1"/>
</dbReference>
<dbReference type="SMR" id="Q63B73"/>
<dbReference type="KEGG" id="bcz:BCE33L2254"/>
<dbReference type="PATRIC" id="fig|288681.22.peg.3245"/>
<dbReference type="UniPathway" id="UPA00076">
    <property type="reaction ID" value="UER00145"/>
</dbReference>
<dbReference type="Proteomes" id="UP000002612">
    <property type="component" value="Chromosome"/>
</dbReference>
<dbReference type="GO" id="GO:0005948">
    <property type="term" value="C:acetolactate synthase complex"/>
    <property type="evidence" value="ECO:0007669"/>
    <property type="project" value="TreeGrafter"/>
</dbReference>
<dbReference type="GO" id="GO:0102481">
    <property type="term" value="F:3D-(3,5/4)-trihydroxycyclohexane-1,2-dione hydrolase activity"/>
    <property type="evidence" value="ECO:0007669"/>
    <property type="project" value="UniProtKB-EC"/>
</dbReference>
<dbReference type="GO" id="GO:0003984">
    <property type="term" value="F:acetolactate synthase activity"/>
    <property type="evidence" value="ECO:0007669"/>
    <property type="project" value="TreeGrafter"/>
</dbReference>
<dbReference type="GO" id="GO:0050660">
    <property type="term" value="F:flavin adenine dinucleotide binding"/>
    <property type="evidence" value="ECO:0007669"/>
    <property type="project" value="TreeGrafter"/>
</dbReference>
<dbReference type="GO" id="GO:0000287">
    <property type="term" value="F:magnesium ion binding"/>
    <property type="evidence" value="ECO:0007669"/>
    <property type="project" value="UniProtKB-UniRule"/>
</dbReference>
<dbReference type="GO" id="GO:0030976">
    <property type="term" value="F:thiamine pyrophosphate binding"/>
    <property type="evidence" value="ECO:0007669"/>
    <property type="project" value="UniProtKB-UniRule"/>
</dbReference>
<dbReference type="GO" id="GO:0019310">
    <property type="term" value="P:inositol catabolic process"/>
    <property type="evidence" value="ECO:0007669"/>
    <property type="project" value="UniProtKB-UniRule"/>
</dbReference>
<dbReference type="GO" id="GO:0009097">
    <property type="term" value="P:isoleucine biosynthetic process"/>
    <property type="evidence" value="ECO:0007669"/>
    <property type="project" value="TreeGrafter"/>
</dbReference>
<dbReference type="GO" id="GO:0009099">
    <property type="term" value="P:L-valine biosynthetic process"/>
    <property type="evidence" value="ECO:0007669"/>
    <property type="project" value="TreeGrafter"/>
</dbReference>
<dbReference type="CDD" id="cd02003">
    <property type="entry name" value="TPP_IolD"/>
    <property type="match status" value="1"/>
</dbReference>
<dbReference type="CDD" id="cd07035">
    <property type="entry name" value="TPP_PYR_POX_like"/>
    <property type="match status" value="1"/>
</dbReference>
<dbReference type="FunFam" id="3.40.50.1220:FF:000040">
    <property type="entry name" value="3D-(3,5/4)-trihydroxycyclohexane-1,2-dione hydrolase"/>
    <property type="match status" value="1"/>
</dbReference>
<dbReference type="FunFam" id="3.40.50.970:FF:000056">
    <property type="entry name" value="3D-(3,5/4)-trihydroxycyclohexane-1,2-dione hydrolase"/>
    <property type="match status" value="1"/>
</dbReference>
<dbReference type="FunFam" id="3.40.50.970:FF:000072">
    <property type="entry name" value="3D-(3,5/4)-trihydroxycyclohexane-1,2-dione hydrolase"/>
    <property type="match status" value="1"/>
</dbReference>
<dbReference type="Gene3D" id="3.40.50.970">
    <property type="match status" value="2"/>
</dbReference>
<dbReference type="Gene3D" id="3.40.50.1220">
    <property type="entry name" value="TPP-binding domain"/>
    <property type="match status" value="1"/>
</dbReference>
<dbReference type="HAMAP" id="MF_01669">
    <property type="entry name" value="IolD"/>
    <property type="match status" value="1"/>
</dbReference>
<dbReference type="InterPro" id="IPR029035">
    <property type="entry name" value="DHS-like_NAD/FAD-binding_dom"/>
</dbReference>
<dbReference type="InterPro" id="IPR030817">
    <property type="entry name" value="Myo_inos_IolD"/>
</dbReference>
<dbReference type="InterPro" id="IPR023757">
    <property type="entry name" value="THcHDO_hydrolase_firmi"/>
</dbReference>
<dbReference type="InterPro" id="IPR029061">
    <property type="entry name" value="THDP-binding"/>
</dbReference>
<dbReference type="InterPro" id="IPR012000">
    <property type="entry name" value="Thiamin_PyroP_enz_cen_dom"/>
</dbReference>
<dbReference type="InterPro" id="IPR012001">
    <property type="entry name" value="Thiamin_PyroP_enz_TPP-bd_dom"/>
</dbReference>
<dbReference type="InterPro" id="IPR000399">
    <property type="entry name" value="TPP-bd_CS"/>
</dbReference>
<dbReference type="InterPro" id="IPR045229">
    <property type="entry name" value="TPP_enz"/>
</dbReference>
<dbReference type="InterPro" id="IPR011766">
    <property type="entry name" value="TPP_enzyme_TPP-bd"/>
</dbReference>
<dbReference type="NCBIfam" id="TIGR04377">
    <property type="entry name" value="myo_inos_iolD"/>
    <property type="match status" value="1"/>
</dbReference>
<dbReference type="PANTHER" id="PTHR18968:SF9">
    <property type="entry name" value="3D-(3,5_4)-TRIHYDROXYCYCLOHEXANE-1,2-DIONE HYDROLASE"/>
    <property type="match status" value="1"/>
</dbReference>
<dbReference type="PANTHER" id="PTHR18968">
    <property type="entry name" value="THIAMINE PYROPHOSPHATE ENZYMES"/>
    <property type="match status" value="1"/>
</dbReference>
<dbReference type="Pfam" id="PF02775">
    <property type="entry name" value="TPP_enzyme_C"/>
    <property type="match status" value="1"/>
</dbReference>
<dbReference type="Pfam" id="PF00205">
    <property type="entry name" value="TPP_enzyme_M"/>
    <property type="match status" value="1"/>
</dbReference>
<dbReference type="Pfam" id="PF02776">
    <property type="entry name" value="TPP_enzyme_N"/>
    <property type="match status" value="1"/>
</dbReference>
<dbReference type="SUPFAM" id="SSF52467">
    <property type="entry name" value="DHS-like NAD/FAD-binding domain"/>
    <property type="match status" value="1"/>
</dbReference>
<dbReference type="SUPFAM" id="SSF52518">
    <property type="entry name" value="Thiamin diphosphate-binding fold (THDP-binding)"/>
    <property type="match status" value="2"/>
</dbReference>
<dbReference type="PROSITE" id="PS00187">
    <property type="entry name" value="TPP_ENZYMES"/>
    <property type="match status" value="1"/>
</dbReference>
<organism>
    <name type="scientific">Bacillus cereus (strain ZK / E33L)</name>
    <dbReference type="NCBI Taxonomy" id="288681"/>
    <lineage>
        <taxon>Bacteria</taxon>
        <taxon>Bacillati</taxon>
        <taxon>Bacillota</taxon>
        <taxon>Bacilli</taxon>
        <taxon>Bacillales</taxon>
        <taxon>Bacillaceae</taxon>
        <taxon>Bacillus</taxon>
        <taxon>Bacillus cereus group</taxon>
    </lineage>
</organism>
<comment type="function">
    <text evidence="1">Involved in the cleavage of the C1-C2 bond of 3D-(3,5/4)-trihydroxycyclohexane-1,2-dione (THcHDO) to yield 5-deoxy-glucuronate (5DG).</text>
</comment>
<comment type="catalytic activity">
    <reaction evidence="1">
        <text>3D-3,5/4-trihydroxycyclohexane-1,2-dione + H2O = 5-deoxy-D-glucuronate + H(+)</text>
        <dbReference type="Rhea" id="RHEA:25836"/>
        <dbReference type="ChEBI" id="CHEBI:15377"/>
        <dbReference type="ChEBI" id="CHEBI:15378"/>
        <dbReference type="ChEBI" id="CHEBI:28446"/>
        <dbReference type="ChEBI" id="CHEBI:58852"/>
        <dbReference type="EC" id="3.7.1.22"/>
    </reaction>
</comment>
<comment type="cofactor">
    <cofactor evidence="1">
        <name>Mg(2+)</name>
        <dbReference type="ChEBI" id="CHEBI:18420"/>
    </cofactor>
    <text evidence="1">Binds 1 Mg(2+) ion per subunit.</text>
</comment>
<comment type="cofactor">
    <cofactor evidence="1">
        <name>thiamine diphosphate</name>
        <dbReference type="ChEBI" id="CHEBI:58937"/>
    </cofactor>
    <text evidence="1">Binds 1 thiamine pyrophosphate per subunit.</text>
</comment>
<comment type="pathway">
    <text evidence="1">Polyol metabolism; myo-inositol degradation into acetyl-CoA; acetyl-CoA from myo-inositol: step 3/7.</text>
</comment>
<comment type="similarity">
    <text evidence="1">Belongs to the TPP enzyme family.</text>
</comment>
<name>IOLD1_BACCZ</name>
<keyword id="KW-0378">Hydrolase</keyword>
<keyword id="KW-0460">Magnesium</keyword>
<keyword id="KW-0479">Metal-binding</keyword>
<keyword id="KW-0520">NAD</keyword>
<keyword id="KW-0786">Thiamine pyrophosphate</keyword>
<accession>Q63B73</accession>
<gene>
    <name evidence="1" type="primary">iolD1</name>
    <name type="ordered locus">BCE33L2254</name>
</gene>
<protein>
    <recommendedName>
        <fullName evidence="1">3D-(3,5/4)-trihydroxycyclohexane-1,2-dione hydrolase 1</fullName>
        <shortName evidence="1">THcHDO hydrolase 1</shortName>
        <ecNumber evidence="1">3.7.1.22</ecNumber>
    </recommendedName>
</protein>